<evidence type="ECO:0000256" key="1">
    <source>
        <dbReference type="SAM" id="MobiDB-lite"/>
    </source>
</evidence>
<evidence type="ECO:0000305" key="2"/>
<gene>
    <name type="primary">EBLN2</name>
    <name type="ORF">GK006</name>
</gene>
<sequence length="272" mass="30450">MGYFLKLYAYVNSHSLFVWVCDRSYKRSFRPMILNKIKELSRNQFSTMSHLRKDSQPSSPGDDAMDRSGLPDLQGRFELSGKNRQYPLDALEPQPSIGDIKDIKKAAKSMLDPAHKSHFHPVTPSLVFLCFIFDGLHQALLSVGVSKRSNTVVGNENEERGTPYASRFKDMPNFIALEKSSVLRHCCDLLIGIAAGSSDKICTSSLQVQRRFKAMMASIGRLSHGESADLLISCNAESAIGWISSRPWVGELMFTLLFGDFESPLHKLRKSS</sequence>
<keyword id="KW-1185">Reference proteome</keyword>
<name>EBLN2_HUMAN</name>
<organism>
    <name type="scientific">Homo sapiens</name>
    <name type="common">Human</name>
    <dbReference type="NCBI Taxonomy" id="9606"/>
    <lineage>
        <taxon>Eukaryota</taxon>
        <taxon>Metazoa</taxon>
        <taxon>Chordata</taxon>
        <taxon>Craniata</taxon>
        <taxon>Vertebrata</taxon>
        <taxon>Euteleostomi</taxon>
        <taxon>Mammalia</taxon>
        <taxon>Eutheria</taxon>
        <taxon>Euarchontoglires</taxon>
        <taxon>Primates</taxon>
        <taxon>Haplorrhini</taxon>
        <taxon>Catarrhini</taxon>
        <taxon>Hominidae</taxon>
        <taxon>Homo</taxon>
    </lineage>
</organism>
<comment type="function">
    <text>May act as an RNA-binding protein. The C-terminal region is highly homologous to the bornavirus nucleocapsid N protein that binds viral RNA and oligomerizes. The viral protein also possesses a nuclear import and a nuclear export signal. These 2 signals seem absent in EBLN-2 supporting an unrelated function in Human.</text>
</comment>
<comment type="miscellaneous">
    <text>Bornavirus is a non-retroviral RNA virus that does not generate DNA forms during viral replication. Therefore, integration of EBLN-2 must have occur through a mechanism relying on an endogenous reverse transcriptase activity.</text>
</comment>
<feature type="chain" id="PRO_0000358716" description="Endogenous Bornavirus-like nucleoprotein 2">
    <location>
        <begin position="1"/>
        <end position="272"/>
    </location>
</feature>
<feature type="region of interest" description="Disordered" evidence="1">
    <location>
        <begin position="48"/>
        <end position="70"/>
    </location>
</feature>
<feature type="sequence conflict" description="In Ref. 1; AAK83528." evidence="2" ref="1">
    <original>A</original>
    <variation>G</variation>
    <location>
        <position position="176"/>
    </location>
</feature>
<reference key="1">
    <citation type="submission" date="2001-05" db="EMBL/GenBank/DDBJ databases">
        <authorList>
            <person name="Xu X."/>
            <person name="Huang J."/>
            <person name="Rong Y."/>
            <person name="Xiao H."/>
            <person name="Chen Z."/>
            <person name="Han Z."/>
        </authorList>
    </citation>
    <scope>NUCLEOTIDE SEQUENCE [LARGE SCALE MRNA]</scope>
    <source>
        <tissue>Hepatoma</tissue>
    </source>
</reference>
<reference key="2">
    <citation type="journal article" date="2006" name="Nature">
        <title>The DNA sequence, annotation and analysis of human chromosome 3.</title>
        <authorList>
            <person name="Muzny D.M."/>
            <person name="Scherer S.E."/>
            <person name="Kaul R."/>
            <person name="Wang J."/>
            <person name="Yu J."/>
            <person name="Sudbrak R."/>
            <person name="Buhay C.J."/>
            <person name="Chen R."/>
            <person name="Cree A."/>
            <person name="Ding Y."/>
            <person name="Dugan-Rocha S."/>
            <person name="Gill R."/>
            <person name="Gunaratne P."/>
            <person name="Harris R.A."/>
            <person name="Hawes A.C."/>
            <person name="Hernandez J."/>
            <person name="Hodgson A.V."/>
            <person name="Hume J."/>
            <person name="Jackson A."/>
            <person name="Khan Z.M."/>
            <person name="Kovar-Smith C."/>
            <person name="Lewis L.R."/>
            <person name="Lozado R.J."/>
            <person name="Metzker M.L."/>
            <person name="Milosavljevic A."/>
            <person name="Miner G.R."/>
            <person name="Morgan M.B."/>
            <person name="Nazareth L.V."/>
            <person name="Scott G."/>
            <person name="Sodergren E."/>
            <person name="Song X.-Z."/>
            <person name="Steffen D."/>
            <person name="Wei S."/>
            <person name="Wheeler D.A."/>
            <person name="Wright M.W."/>
            <person name="Worley K.C."/>
            <person name="Yuan Y."/>
            <person name="Zhang Z."/>
            <person name="Adams C.Q."/>
            <person name="Ansari-Lari M.A."/>
            <person name="Ayele M."/>
            <person name="Brown M.J."/>
            <person name="Chen G."/>
            <person name="Chen Z."/>
            <person name="Clendenning J."/>
            <person name="Clerc-Blankenburg K.P."/>
            <person name="Chen R."/>
            <person name="Chen Z."/>
            <person name="Davis C."/>
            <person name="Delgado O."/>
            <person name="Dinh H.H."/>
            <person name="Dong W."/>
            <person name="Draper H."/>
            <person name="Ernst S."/>
            <person name="Fu G."/>
            <person name="Gonzalez-Garay M.L."/>
            <person name="Garcia D.K."/>
            <person name="Gillett W."/>
            <person name="Gu J."/>
            <person name="Hao B."/>
            <person name="Haugen E."/>
            <person name="Havlak P."/>
            <person name="He X."/>
            <person name="Hennig S."/>
            <person name="Hu S."/>
            <person name="Huang W."/>
            <person name="Jackson L.R."/>
            <person name="Jacob L.S."/>
            <person name="Kelly S.H."/>
            <person name="Kube M."/>
            <person name="Levy R."/>
            <person name="Li Z."/>
            <person name="Liu B."/>
            <person name="Liu J."/>
            <person name="Liu W."/>
            <person name="Lu J."/>
            <person name="Maheshwari M."/>
            <person name="Nguyen B.-V."/>
            <person name="Okwuonu G.O."/>
            <person name="Palmeiri A."/>
            <person name="Pasternak S."/>
            <person name="Perez L.M."/>
            <person name="Phelps K.A."/>
            <person name="Plopper F.J."/>
            <person name="Qiang B."/>
            <person name="Raymond C."/>
            <person name="Rodriguez R."/>
            <person name="Saenphimmachak C."/>
            <person name="Santibanez J."/>
            <person name="Shen H."/>
            <person name="Shen Y."/>
            <person name="Subramanian S."/>
            <person name="Tabor P.E."/>
            <person name="Verduzco D."/>
            <person name="Waldron L."/>
            <person name="Wang J."/>
            <person name="Wang J."/>
            <person name="Wang Q."/>
            <person name="Williams G.A."/>
            <person name="Wong G.K.-S."/>
            <person name="Yao Z."/>
            <person name="Zhang J."/>
            <person name="Zhang X."/>
            <person name="Zhao G."/>
            <person name="Zhou J."/>
            <person name="Zhou Y."/>
            <person name="Nelson D."/>
            <person name="Lehrach H."/>
            <person name="Reinhardt R."/>
            <person name="Naylor S.L."/>
            <person name="Yang H."/>
            <person name="Olson M."/>
            <person name="Weinstock G."/>
            <person name="Gibbs R.A."/>
        </authorList>
    </citation>
    <scope>NUCLEOTIDE SEQUENCE [LARGE SCALE GENOMIC DNA]</scope>
</reference>
<reference key="3">
    <citation type="journal article" date="2004" name="Genome Res.">
        <title>The status, quality, and expansion of the NIH full-length cDNA project: the Mammalian Gene Collection (MGC).</title>
        <authorList>
            <consortium name="The MGC Project Team"/>
        </authorList>
    </citation>
    <scope>NUCLEOTIDE SEQUENCE [LARGE SCALE MRNA]</scope>
    <source>
        <tissue>Spleen</tissue>
    </source>
</reference>
<reference key="4">
    <citation type="journal article" date="2004" name="Nat. Genet.">
        <title>Complete sequencing and characterization of 21,243 full-length human cDNAs.</title>
        <authorList>
            <person name="Ota T."/>
            <person name="Suzuki Y."/>
            <person name="Nishikawa T."/>
            <person name="Otsuki T."/>
            <person name="Sugiyama T."/>
            <person name="Irie R."/>
            <person name="Wakamatsu A."/>
            <person name="Hayashi K."/>
            <person name="Sato H."/>
            <person name="Nagai K."/>
            <person name="Kimura K."/>
            <person name="Makita H."/>
            <person name="Sekine M."/>
            <person name="Obayashi M."/>
            <person name="Nishi T."/>
            <person name="Shibahara T."/>
            <person name="Tanaka T."/>
            <person name="Ishii S."/>
            <person name="Yamamoto J."/>
            <person name="Saito K."/>
            <person name="Kawai Y."/>
            <person name="Isono Y."/>
            <person name="Nakamura Y."/>
            <person name="Nagahari K."/>
            <person name="Murakami K."/>
            <person name="Yasuda T."/>
            <person name="Iwayanagi T."/>
            <person name="Wagatsuma M."/>
            <person name="Shiratori A."/>
            <person name="Sudo H."/>
            <person name="Hosoiri T."/>
            <person name="Kaku Y."/>
            <person name="Kodaira H."/>
            <person name="Kondo H."/>
            <person name="Sugawara M."/>
            <person name="Takahashi M."/>
            <person name="Kanda K."/>
            <person name="Yokoi T."/>
            <person name="Furuya T."/>
            <person name="Kikkawa E."/>
            <person name="Omura Y."/>
            <person name="Abe K."/>
            <person name="Kamihara K."/>
            <person name="Katsuta N."/>
            <person name="Sato K."/>
            <person name="Tanikawa M."/>
            <person name="Yamazaki M."/>
            <person name="Ninomiya K."/>
            <person name="Ishibashi T."/>
            <person name="Yamashita H."/>
            <person name="Murakawa K."/>
            <person name="Fujimori K."/>
            <person name="Tanai H."/>
            <person name="Kimata M."/>
            <person name="Watanabe M."/>
            <person name="Hiraoka S."/>
            <person name="Chiba Y."/>
            <person name="Ishida S."/>
            <person name="Ono Y."/>
            <person name="Takiguchi S."/>
            <person name="Watanabe S."/>
            <person name="Yosida M."/>
            <person name="Hotuta T."/>
            <person name="Kusano J."/>
            <person name="Kanehori K."/>
            <person name="Takahashi-Fujii A."/>
            <person name="Hara H."/>
            <person name="Tanase T.-O."/>
            <person name="Nomura Y."/>
            <person name="Togiya S."/>
            <person name="Komai F."/>
            <person name="Hara R."/>
            <person name="Takeuchi K."/>
            <person name="Arita M."/>
            <person name="Imose N."/>
            <person name="Musashino K."/>
            <person name="Yuuki H."/>
            <person name="Oshima A."/>
            <person name="Sasaki N."/>
            <person name="Aotsuka S."/>
            <person name="Yoshikawa Y."/>
            <person name="Matsunawa H."/>
            <person name="Ichihara T."/>
            <person name="Shiohata N."/>
            <person name="Sano S."/>
            <person name="Moriya S."/>
            <person name="Momiyama H."/>
            <person name="Satoh N."/>
            <person name="Takami S."/>
            <person name="Terashima Y."/>
            <person name="Suzuki O."/>
            <person name="Nakagawa S."/>
            <person name="Senoh A."/>
            <person name="Mizoguchi H."/>
            <person name="Goto Y."/>
            <person name="Shimizu F."/>
            <person name="Wakebe H."/>
            <person name="Hishigaki H."/>
            <person name="Watanabe T."/>
            <person name="Sugiyama A."/>
            <person name="Takemoto M."/>
            <person name="Kawakami B."/>
            <person name="Yamazaki M."/>
            <person name="Watanabe K."/>
            <person name="Kumagai A."/>
            <person name="Itakura S."/>
            <person name="Fukuzumi Y."/>
            <person name="Fujimori Y."/>
            <person name="Komiyama M."/>
            <person name="Tashiro H."/>
            <person name="Tanigami A."/>
            <person name="Fujiwara T."/>
            <person name="Ono T."/>
            <person name="Yamada K."/>
            <person name="Fujii Y."/>
            <person name="Ozaki K."/>
            <person name="Hirao M."/>
            <person name="Ohmori Y."/>
            <person name="Kawabata A."/>
            <person name="Hikiji T."/>
            <person name="Kobatake N."/>
            <person name="Inagaki H."/>
            <person name="Ikema Y."/>
            <person name="Okamoto S."/>
            <person name="Okitani R."/>
            <person name="Kawakami T."/>
            <person name="Noguchi S."/>
            <person name="Itoh T."/>
            <person name="Shigeta K."/>
            <person name="Senba T."/>
            <person name="Matsumura K."/>
            <person name="Nakajima Y."/>
            <person name="Mizuno T."/>
            <person name="Morinaga M."/>
            <person name="Sasaki M."/>
            <person name="Togashi T."/>
            <person name="Oyama M."/>
            <person name="Hata H."/>
            <person name="Watanabe M."/>
            <person name="Komatsu T."/>
            <person name="Mizushima-Sugano J."/>
            <person name="Satoh T."/>
            <person name="Shirai Y."/>
            <person name="Takahashi Y."/>
            <person name="Nakagawa K."/>
            <person name="Okumura K."/>
            <person name="Nagase T."/>
            <person name="Nomura N."/>
            <person name="Kikuchi H."/>
            <person name="Masuho Y."/>
            <person name="Yamashita R."/>
            <person name="Nakai K."/>
            <person name="Yada T."/>
            <person name="Nakamura Y."/>
            <person name="Ohara O."/>
            <person name="Isogai T."/>
            <person name="Sugano S."/>
        </authorList>
    </citation>
    <scope>NUCLEOTIDE SEQUENCE [LARGE SCALE MRNA] OF 65-272</scope>
    <source>
        <tissue>Embryo</tissue>
    </source>
</reference>
<reference key="5">
    <citation type="journal article" date="2010" name="Nature">
        <title>Endogenous non-retroviral RNA virus elements in mammalian genomes.</title>
        <authorList>
            <person name="Horie M."/>
            <person name="Honda T."/>
            <person name="Suzuki Y."/>
            <person name="Kobayashi Y."/>
            <person name="Daito T."/>
            <person name="Oshida T."/>
            <person name="Ikuta K."/>
            <person name="Jern P."/>
            <person name="Gojobori T."/>
            <person name="Coffin J.M."/>
            <person name="Tomonaga K."/>
        </authorList>
    </citation>
    <scope>SIMILARITY WITH BORNAVIRUS NUCLEOCAPSID</scope>
</reference>
<accession>Q6P2I7</accession>
<accession>Q8WWH3</accession>
<accession>Q9NW89</accession>
<dbReference type="EMBL" id="AY036895">
    <property type="protein sequence ID" value="AAK83528.1"/>
    <property type="molecule type" value="mRNA"/>
</dbReference>
<dbReference type="EMBL" id="AC103559">
    <property type="status" value="NOT_ANNOTATED_CDS"/>
    <property type="molecule type" value="Genomic_DNA"/>
</dbReference>
<dbReference type="EMBL" id="BC051316">
    <property type="protein sequence ID" value="AAH51316.1"/>
    <property type="molecule type" value="mRNA"/>
</dbReference>
<dbReference type="EMBL" id="BC064501">
    <property type="protein sequence ID" value="AAH64501.1"/>
    <property type="molecule type" value="mRNA"/>
</dbReference>
<dbReference type="EMBL" id="AK001075">
    <property type="protein sequence ID" value="BAA91494.1"/>
    <property type="molecule type" value="mRNA"/>
</dbReference>
<dbReference type="CCDS" id="CCDS54608.1"/>
<dbReference type="RefSeq" id="NP_060499.3">
    <property type="nucleotide sequence ID" value="NM_018029.4"/>
</dbReference>
<dbReference type="SMR" id="Q6P2I7"/>
<dbReference type="BioGRID" id="120408">
    <property type="interactions" value="10"/>
</dbReference>
<dbReference type="IntAct" id="Q6P2I7">
    <property type="interactions" value="2"/>
</dbReference>
<dbReference type="STRING" id="9606.ENSP00000432104"/>
<dbReference type="GlyGen" id="Q6P2I7">
    <property type="glycosylation" value="1 site"/>
</dbReference>
<dbReference type="iPTMnet" id="Q6P2I7"/>
<dbReference type="PhosphoSitePlus" id="Q6P2I7"/>
<dbReference type="BioMuta" id="EBLN2"/>
<dbReference type="DMDM" id="74737218"/>
<dbReference type="jPOST" id="Q6P2I7"/>
<dbReference type="PaxDb" id="9606-ENSP00000432104"/>
<dbReference type="Antibodypedia" id="76899">
    <property type="antibodies" value="75 antibodies from 6 providers"/>
</dbReference>
<dbReference type="DNASU" id="55096"/>
<dbReference type="Ensembl" id="ENST00000533473.1">
    <property type="protein sequence ID" value="ENSP00000432104.1"/>
    <property type="gene ID" value="ENSG00000255423.1"/>
</dbReference>
<dbReference type="GeneID" id="55096"/>
<dbReference type="KEGG" id="hsa:55096"/>
<dbReference type="MANE-Select" id="ENST00000533473.1">
    <property type="protein sequence ID" value="ENSP00000432104.1"/>
    <property type="RefSeq nucleotide sequence ID" value="NM_018029.4"/>
    <property type="RefSeq protein sequence ID" value="NP_060499.3"/>
</dbReference>
<dbReference type="UCSC" id="uc003dpj.4">
    <property type="organism name" value="human"/>
</dbReference>
<dbReference type="AGR" id="HGNC:25493"/>
<dbReference type="CTD" id="55096"/>
<dbReference type="DisGeNET" id="55096"/>
<dbReference type="GeneCards" id="EBLN2"/>
<dbReference type="HGNC" id="HGNC:25493">
    <property type="gene designation" value="EBLN2"/>
</dbReference>
<dbReference type="HPA" id="ENSG00000255423">
    <property type="expression patterns" value="Tissue enriched (bone)"/>
</dbReference>
<dbReference type="MIM" id="613250">
    <property type="type" value="gene"/>
</dbReference>
<dbReference type="neXtProt" id="NX_Q6P2I7"/>
<dbReference type="OpenTargets" id="ENSG00000255423"/>
<dbReference type="VEuPathDB" id="HostDB:ENSG00000255423"/>
<dbReference type="eggNOG" id="ENOG502TDPR">
    <property type="taxonomic scope" value="Eukaryota"/>
</dbReference>
<dbReference type="GeneTree" id="ENSGT00490000044176"/>
<dbReference type="HOGENOM" id="CLU_089340_0_0_1"/>
<dbReference type="InParanoid" id="Q6P2I7"/>
<dbReference type="OMA" id="FVWVCDR"/>
<dbReference type="OrthoDB" id="9518156at2759"/>
<dbReference type="PAN-GO" id="Q6P2I7">
    <property type="GO annotations" value="0 GO annotations based on evolutionary models"/>
</dbReference>
<dbReference type="PhylomeDB" id="Q6P2I7"/>
<dbReference type="PathwayCommons" id="Q6P2I7"/>
<dbReference type="BioGRID-ORCS" id="55096">
    <property type="hits" value="9 hits in 1143 CRISPR screens"/>
</dbReference>
<dbReference type="GenomeRNAi" id="55096"/>
<dbReference type="Pharos" id="Q6P2I7">
    <property type="development level" value="Tdark"/>
</dbReference>
<dbReference type="PRO" id="PR:Q6P2I7"/>
<dbReference type="Proteomes" id="UP000005640">
    <property type="component" value="Chromosome 3"/>
</dbReference>
<dbReference type="RNAct" id="Q6P2I7">
    <property type="molecule type" value="protein"/>
</dbReference>
<dbReference type="Bgee" id="ENSG00000255423">
    <property type="expression patterns" value="Expressed in buccal mucosa cell and 185 other cell types or tissues"/>
</dbReference>
<dbReference type="Gene3D" id="1.10.3040.10">
    <property type="entry name" value="borna disease virus nucleoprotein, domain 1"/>
    <property type="match status" value="1"/>
</dbReference>
<dbReference type="InterPro" id="IPR009441">
    <property type="entry name" value="P40_nucleoprot_BD-vir"/>
</dbReference>
<dbReference type="InterPro" id="IPR036260">
    <property type="entry name" value="P40_nucleoprot_sf_BD-vir"/>
</dbReference>
<dbReference type="InterPro" id="IPR015969">
    <property type="entry name" value="P40_nucleoprot_sub1_BD-vir"/>
</dbReference>
<dbReference type="Pfam" id="PF06407">
    <property type="entry name" value="BDV_P40"/>
    <property type="match status" value="1"/>
</dbReference>
<dbReference type="SUPFAM" id="SSF101399">
    <property type="entry name" value="P40 nucleoprotein"/>
    <property type="match status" value="1"/>
</dbReference>
<protein>
    <recommendedName>
        <fullName>Endogenous Bornavirus-like nucleoprotein 2</fullName>
    </recommendedName>
    <alternativeName>
        <fullName>Endogenous Borna-like N element-2</fullName>
        <shortName>EBLN-2</shortName>
    </alternativeName>
</protein>
<proteinExistence type="evidence at transcript level"/>